<feature type="chain" id="PRO_0000056320" description="Zinc finger protein-like 1">
    <location>
        <begin position="1"/>
        <end position="317"/>
    </location>
</feature>
<feature type="topological domain" description="Cytoplasmic" evidence="2">
    <location>
        <begin position="1"/>
        <end position="271"/>
    </location>
</feature>
<feature type="transmembrane region" description="Helical" evidence="2">
    <location>
        <begin position="272"/>
        <end position="292"/>
    </location>
</feature>
<feature type="topological domain" description="Lumenal" evidence="2">
    <location>
        <begin position="293"/>
        <end position="317"/>
    </location>
</feature>
<feature type="zinc finger region" description="B box-type; degenerate">
    <location>
        <begin position="1"/>
        <end position="43"/>
    </location>
</feature>
<feature type="zinc finger region" description="RING-type; degenerate" evidence="3">
    <location>
        <begin position="53"/>
        <end position="101"/>
    </location>
</feature>
<accession>P62447</accession>
<organism>
    <name type="scientific">Danio rerio</name>
    <name type="common">Zebrafish</name>
    <name type="synonym">Brachydanio rerio</name>
    <dbReference type="NCBI Taxonomy" id="7955"/>
    <lineage>
        <taxon>Eukaryota</taxon>
        <taxon>Metazoa</taxon>
        <taxon>Chordata</taxon>
        <taxon>Craniata</taxon>
        <taxon>Vertebrata</taxon>
        <taxon>Euteleostomi</taxon>
        <taxon>Actinopterygii</taxon>
        <taxon>Neopterygii</taxon>
        <taxon>Teleostei</taxon>
        <taxon>Ostariophysi</taxon>
        <taxon>Cypriniformes</taxon>
        <taxon>Danionidae</taxon>
        <taxon>Danioninae</taxon>
        <taxon>Danio</taxon>
    </lineage>
</organism>
<comment type="function">
    <text evidence="1">Required for cis-Golgi integrity and efficient ER to Golgi transport.</text>
</comment>
<comment type="subcellular location">
    <subcellularLocation>
        <location evidence="1">Golgi apparatus</location>
        <location evidence="1">cis-Golgi network membrane</location>
        <topology evidence="1">Single-pass membrane protein</topology>
    </subcellularLocation>
</comment>
<comment type="similarity">
    <text evidence="4">Belongs to the ZFPL1 family.</text>
</comment>
<protein>
    <recommendedName>
        <fullName>Zinc finger protein-like 1</fullName>
    </recommendedName>
</protein>
<name>ZFPL1_DANRE</name>
<proteinExistence type="evidence at transcript level"/>
<evidence type="ECO:0000250" key="1"/>
<evidence type="ECO:0000255" key="2"/>
<evidence type="ECO:0000255" key="3">
    <source>
        <dbReference type="PROSITE-ProRule" id="PRU00175"/>
    </source>
</evidence>
<evidence type="ECO:0000305" key="4"/>
<keyword id="KW-0931">ER-Golgi transport</keyword>
<keyword id="KW-0333">Golgi apparatus</keyword>
<keyword id="KW-0472">Membrane</keyword>
<keyword id="KW-0479">Metal-binding</keyword>
<keyword id="KW-1185">Reference proteome</keyword>
<keyword id="KW-0812">Transmembrane</keyword>
<keyword id="KW-1133">Transmembrane helix</keyword>
<keyword id="KW-0813">Transport</keyword>
<keyword id="KW-0862">Zinc</keyword>
<keyword id="KW-0863">Zinc-finger</keyword>
<gene>
    <name type="primary">zfpl1</name>
    <name type="ORF">zgc:63760</name>
</gene>
<sequence length="317" mass="35704">MGLCKCPKKKVTNLFCFKHRVNVCEHCLVSNHNKCIVQSYLQWLQDSDYNPNCSLCIQPLDSQDTVRLVCYDLFHWSCLNELASHQPLNTAPDGYQCPTCQGPVFPPRNLASPVADMLREQLSSVNWARAGLGLPLIEDPEEEETTTHSGTSFSEWSTFETTSVDVSMSNPTLTSLPPHQDGEHIYNNREQSAPNNTVFNMVTTSATDTVTISTVTSPRKLYDTRDLGHSAVMQIDFDDDKYRRRPALNWFAQVLKNCTSTKKKTLALKHRIFLLLLFGVIGFFTLIIIMAKFGRASAETDPNLDPLLNPNIRIGNM</sequence>
<reference key="1">
    <citation type="submission" date="2003-09" db="EMBL/GenBank/DDBJ databases">
        <authorList>
            <consortium name="NIH - Zebrafish Gene Collection (ZGC) project"/>
        </authorList>
    </citation>
    <scope>NUCLEOTIDE SEQUENCE [LARGE SCALE MRNA]</scope>
    <source>
        <strain>AB</strain>
    </source>
</reference>
<dbReference type="EMBL" id="BC058063">
    <property type="protein sequence ID" value="AAH58063.1"/>
    <property type="molecule type" value="mRNA"/>
</dbReference>
<dbReference type="RefSeq" id="NP_956967.1">
    <property type="nucleotide sequence ID" value="NM_200673.1"/>
</dbReference>
<dbReference type="FunCoup" id="P62447">
    <property type="interactions" value="3532"/>
</dbReference>
<dbReference type="STRING" id="7955.ENSDARP00000141625"/>
<dbReference type="PaxDb" id="7955-ENSDARP00000037977"/>
<dbReference type="GeneID" id="393646"/>
<dbReference type="KEGG" id="dre:393646"/>
<dbReference type="AGR" id="ZFIN:ZDB-GENE-040426-1255"/>
<dbReference type="CTD" id="7542"/>
<dbReference type="ZFIN" id="ZDB-GENE-040426-1255">
    <property type="gene designation" value="zfpl1"/>
</dbReference>
<dbReference type="eggNOG" id="KOG3970">
    <property type="taxonomic scope" value="Eukaryota"/>
</dbReference>
<dbReference type="InParanoid" id="P62447"/>
<dbReference type="OrthoDB" id="1916590at2759"/>
<dbReference type="PhylomeDB" id="P62447"/>
<dbReference type="PRO" id="PR:P62447"/>
<dbReference type="Proteomes" id="UP000000437">
    <property type="component" value="Chromosome 5"/>
</dbReference>
<dbReference type="GO" id="GO:0005794">
    <property type="term" value="C:Golgi apparatus"/>
    <property type="evidence" value="ECO:0000318"/>
    <property type="project" value="GO_Central"/>
</dbReference>
<dbReference type="GO" id="GO:0016020">
    <property type="term" value="C:membrane"/>
    <property type="evidence" value="ECO:0007669"/>
    <property type="project" value="UniProtKB-KW"/>
</dbReference>
<dbReference type="GO" id="GO:0008270">
    <property type="term" value="F:zinc ion binding"/>
    <property type="evidence" value="ECO:0007669"/>
    <property type="project" value="UniProtKB-KW"/>
</dbReference>
<dbReference type="GO" id="GO:0016192">
    <property type="term" value="P:vesicle-mediated transport"/>
    <property type="evidence" value="ECO:0007669"/>
    <property type="project" value="UniProtKB-KW"/>
</dbReference>
<dbReference type="CDD" id="cd16487">
    <property type="entry name" value="mRING-H2-C3DHC3_ZFPL1"/>
    <property type="match status" value="1"/>
</dbReference>
<dbReference type="Gene3D" id="3.30.40.10">
    <property type="entry name" value="Zinc/RING finger domain, C3HC4 (zinc finger)"/>
    <property type="match status" value="1"/>
</dbReference>
<dbReference type="InterPro" id="IPR039043">
    <property type="entry name" value="ZFPL1"/>
</dbReference>
<dbReference type="InterPro" id="IPR001841">
    <property type="entry name" value="Znf_RING"/>
</dbReference>
<dbReference type="InterPro" id="IPR013083">
    <property type="entry name" value="Znf_RING/FYVE/PHD"/>
</dbReference>
<dbReference type="PANTHER" id="PTHR12981">
    <property type="entry name" value="ZINC FINGER PROTEIN-LIKE 1"/>
    <property type="match status" value="1"/>
</dbReference>
<dbReference type="PANTHER" id="PTHR12981:SF0">
    <property type="entry name" value="ZINC FINGER PROTEIN-LIKE 1"/>
    <property type="match status" value="1"/>
</dbReference>
<dbReference type="SUPFAM" id="SSF57850">
    <property type="entry name" value="RING/U-box"/>
    <property type="match status" value="1"/>
</dbReference>
<dbReference type="PROSITE" id="PS50089">
    <property type="entry name" value="ZF_RING_2"/>
    <property type="match status" value="1"/>
</dbReference>